<feature type="chain" id="PRO_0000196697" description="Putative phosphoenolpyruvate synthase regulatory protein">
    <location>
        <begin position="1"/>
        <end position="279"/>
    </location>
</feature>
<feature type="binding site" evidence="1">
    <location>
        <begin position="159"/>
        <end position="166"/>
    </location>
    <ligand>
        <name>ADP</name>
        <dbReference type="ChEBI" id="CHEBI:456216"/>
    </ligand>
</feature>
<reference key="1">
    <citation type="journal article" date="2002" name="Nature">
        <title>Genome sequence of the plant pathogen Ralstonia solanacearum.</title>
        <authorList>
            <person name="Salanoubat M."/>
            <person name="Genin S."/>
            <person name="Artiguenave F."/>
            <person name="Gouzy J."/>
            <person name="Mangenot S."/>
            <person name="Arlat M."/>
            <person name="Billault A."/>
            <person name="Brottier P."/>
            <person name="Camus J.-C."/>
            <person name="Cattolico L."/>
            <person name="Chandler M."/>
            <person name="Choisne N."/>
            <person name="Claudel-Renard C."/>
            <person name="Cunnac S."/>
            <person name="Demange N."/>
            <person name="Gaspin C."/>
            <person name="Lavie M."/>
            <person name="Moisan A."/>
            <person name="Robert C."/>
            <person name="Saurin W."/>
            <person name="Schiex T."/>
            <person name="Siguier P."/>
            <person name="Thebault P."/>
            <person name="Whalen M."/>
            <person name="Wincker P."/>
            <person name="Levy M."/>
            <person name="Weissenbach J."/>
            <person name="Boucher C.A."/>
        </authorList>
    </citation>
    <scope>NUCLEOTIDE SEQUENCE [LARGE SCALE GENOMIC DNA]</scope>
    <source>
        <strain>ATCC BAA-1114 / GMI1000</strain>
    </source>
</reference>
<protein>
    <recommendedName>
        <fullName evidence="1">Putative phosphoenolpyruvate synthase regulatory protein</fullName>
        <shortName evidence="1">PEP synthase regulatory protein</shortName>
        <shortName evidence="1">PSRP</shortName>
        <ecNumber evidence="1">2.7.11.33</ecNumber>
        <ecNumber evidence="1">2.7.4.28</ecNumber>
    </recommendedName>
    <alternativeName>
        <fullName evidence="1">Pyruvate, water dikinase regulatory protein</fullName>
    </alternativeName>
</protein>
<evidence type="ECO:0000255" key="1">
    <source>
        <dbReference type="HAMAP-Rule" id="MF_01062"/>
    </source>
</evidence>
<accession>Q8XZH5</accession>
<comment type="function">
    <text evidence="1">Bifunctional serine/threonine kinase and phosphorylase involved in the regulation of the phosphoenolpyruvate synthase (PEPS) by catalyzing its phosphorylation/dephosphorylation.</text>
</comment>
<comment type="catalytic activity">
    <reaction evidence="1">
        <text>[pyruvate, water dikinase] + ADP = [pyruvate, water dikinase]-phosphate + AMP + H(+)</text>
        <dbReference type="Rhea" id="RHEA:46020"/>
        <dbReference type="Rhea" id="RHEA-COMP:11425"/>
        <dbReference type="Rhea" id="RHEA-COMP:11426"/>
        <dbReference type="ChEBI" id="CHEBI:15378"/>
        <dbReference type="ChEBI" id="CHEBI:43176"/>
        <dbReference type="ChEBI" id="CHEBI:68546"/>
        <dbReference type="ChEBI" id="CHEBI:456215"/>
        <dbReference type="ChEBI" id="CHEBI:456216"/>
        <dbReference type="EC" id="2.7.11.33"/>
    </reaction>
</comment>
<comment type="catalytic activity">
    <reaction evidence="1">
        <text>[pyruvate, water dikinase]-phosphate + phosphate + H(+) = [pyruvate, water dikinase] + diphosphate</text>
        <dbReference type="Rhea" id="RHEA:48580"/>
        <dbReference type="Rhea" id="RHEA-COMP:11425"/>
        <dbReference type="Rhea" id="RHEA-COMP:11426"/>
        <dbReference type="ChEBI" id="CHEBI:15378"/>
        <dbReference type="ChEBI" id="CHEBI:33019"/>
        <dbReference type="ChEBI" id="CHEBI:43176"/>
        <dbReference type="ChEBI" id="CHEBI:43474"/>
        <dbReference type="ChEBI" id="CHEBI:68546"/>
        <dbReference type="EC" id="2.7.4.28"/>
    </reaction>
</comment>
<comment type="similarity">
    <text evidence="1">Belongs to the pyruvate, phosphate/water dikinase regulatory protein family. PSRP subfamily.</text>
</comment>
<sequence>MTDLAAKPGIRTVFIVSDGTGITAETFSHSILAQFEMKFRQVRIPFVDTVDKAHVAVSKINEAFHVEGMKPIVFTTLVDAEANRIVHQARATILDMFQTFIEPLERELGLKSSHAIGRFHQNADTEAYKNRIEAINFSLAHDDGQSHKNLAEADVILVGVSRSGKTPTSLYLAMQYGVKSANYPLIPDDFERGKLPTVLYEYKSKIFGLTIDPQRLSEIRNERRPGSKYAALENCRYEVNEAETLMRRESIKWLSSTHKSIEEIATTILQDIKMERDAY</sequence>
<gene>
    <name type="ordered locus">RSc1420</name>
    <name type="ORF">RS05272</name>
</gene>
<keyword id="KW-0418">Kinase</keyword>
<keyword id="KW-0547">Nucleotide-binding</keyword>
<keyword id="KW-1185">Reference proteome</keyword>
<keyword id="KW-0723">Serine/threonine-protein kinase</keyword>
<keyword id="KW-0808">Transferase</keyword>
<name>PSRP_RALN1</name>
<proteinExistence type="inferred from homology"/>
<organism>
    <name type="scientific">Ralstonia nicotianae (strain ATCC BAA-1114 / GMI1000)</name>
    <name type="common">Ralstonia solanacearum</name>
    <dbReference type="NCBI Taxonomy" id="267608"/>
    <lineage>
        <taxon>Bacteria</taxon>
        <taxon>Pseudomonadati</taxon>
        <taxon>Pseudomonadota</taxon>
        <taxon>Betaproteobacteria</taxon>
        <taxon>Burkholderiales</taxon>
        <taxon>Burkholderiaceae</taxon>
        <taxon>Ralstonia</taxon>
        <taxon>Ralstonia solanacearum species complex</taxon>
    </lineage>
</organism>
<dbReference type="EC" id="2.7.11.33" evidence="1"/>
<dbReference type="EC" id="2.7.4.28" evidence="1"/>
<dbReference type="EMBL" id="AL646052">
    <property type="protein sequence ID" value="CAD15122.1"/>
    <property type="molecule type" value="Genomic_DNA"/>
</dbReference>
<dbReference type="RefSeq" id="WP_011001369.1">
    <property type="nucleotide sequence ID" value="NC_003295.1"/>
</dbReference>
<dbReference type="SMR" id="Q8XZH5"/>
<dbReference type="STRING" id="267608.RSc1420"/>
<dbReference type="EnsemblBacteria" id="CAD15122">
    <property type="protein sequence ID" value="CAD15122"/>
    <property type="gene ID" value="RSc1420"/>
</dbReference>
<dbReference type="KEGG" id="rso:RSc1420"/>
<dbReference type="eggNOG" id="COG1806">
    <property type="taxonomic scope" value="Bacteria"/>
</dbReference>
<dbReference type="HOGENOM" id="CLU_046206_1_0_4"/>
<dbReference type="Proteomes" id="UP000001436">
    <property type="component" value="Chromosome"/>
</dbReference>
<dbReference type="GO" id="GO:0043531">
    <property type="term" value="F:ADP binding"/>
    <property type="evidence" value="ECO:0007669"/>
    <property type="project" value="UniProtKB-UniRule"/>
</dbReference>
<dbReference type="GO" id="GO:0005524">
    <property type="term" value="F:ATP binding"/>
    <property type="evidence" value="ECO:0007669"/>
    <property type="project" value="InterPro"/>
</dbReference>
<dbReference type="GO" id="GO:0016776">
    <property type="term" value="F:phosphotransferase activity, phosphate group as acceptor"/>
    <property type="evidence" value="ECO:0007669"/>
    <property type="project" value="UniProtKB-UniRule"/>
</dbReference>
<dbReference type="GO" id="GO:0004674">
    <property type="term" value="F:protein serine/threonine kinase activity"/>
    <property type="evidence" value="ECO:0007669"/>
    <property type="project" value="UniProtKB-UniRule"/>
</dbReference>
<dbReference type="HAMAP" id="MF_01062">
    <property type="entry name" value="PSRP"/>
    <property type="match status" value="1"/>
</dbReference>
<dbReference type="InterPro" id="IPR005177">
    <property type="entry name" value="Kinase-pyrophosphorylase"/>
</dbReference>
<dbReference type="InterPro" id="IPR026530">
    <property type="entry name" value="PSRP"/>
</dbReference>
<dbReference type="NCBIfam" id="NF003742">
    <property type="entry name" value="PRK05339.1"/>
    <property type="match status" value="1"/>
</dbReference>
<dbReference type="PANTHER" id="PTHR31756">
    <property type="entry name" value="PYRUVATE, PHOSPHATE DIKINASE REGULATORY PROTEIN 1, CHLOROPLASTIC"/>
    <property type="match status" value="1"/>
</dbReference>
<dbReference type="PANTHER" id="PTHR31756:SF3">
    <property type="entry name" value="PYRUVATE, PHOSPHATE DIKINASE REGULATORY PROTEIN 1, CHLOROPLASTIC"/>
    <property type="match status" value="1"/>
</dbReference>
<dbReference type="Pfam" id="PF03618">
    <property type="entry name" value="Kinase-PPPase"/>
    <property type="match status" value="1"/>
</dbReference>